<feature type="chain" id="PRO_0000301463" description="N-acetylmannosamine kinase">
    <location>
        <begin position="1"/>
        <end position="290"/>
    </location>
</feature>
<feature type="binding site" evidence="1">
    <location>
        <begin position="6"/>
        <end position="13"/>
    </location>
    <ligand>
        <name>ATP</name>
        <dbReference type="ChEBI" id="CHEBI:30616"/>
    </ligand>
</feature>
<feature type="binding site" evidence="1">
    <location>
        <begin position="132"/>
        <end position="139"/>
    </location>
    <ligand>
        <name>ATP</name>
        <dbReference type="ChEBI" id="CHEBI:30616"/>
    </ligand>
</feature>
<feature type="binding site" evidence="1">
    <location>
        <position position="156"/>
    </location>
    <ligand>
        <name>Zn(2+)</name>
        <dbReference type="ChEBI" id="CHEBI:29105"/>
    </ligand>
</feature>
<feature type="binding site" evidence="1">
    <location>
        <position position="166"/>
    </location>
    <ligand>
        <name>Zn(2+)</name>
        <dbReference type="ChEBI" id="CHEBI:29105"/>
    </ligand>
</feature>
<feature type="binding site" evidence="1">
    <location>
        <position position="168"/>
    </location>
    <ligand>
        <name>Zn(2+)</name>
        <dbReference type="ChEBI" id="CHEBI:29105"/>
    </ligand>
</feature>
<feature type="binding site" evidence="1">
    <location>
        <position position="173"/>
    </location>
    <ligand>
        <name>Zn(2+)</name>
        <dbReference type="ChEBI" id="CHEBI:29105"/>
    </ligand>
</feature>
<gene>
    <name evidence="1" type="primary">nanK</name>
    <name type="ordered locus">YPN_1364</name>
    <name type="ORF">YP516_1503</name>
</gene>
<protein>
    <recommendedName>
        <fullName evidence="1">N-acetylmannosamine kinase</fullName>
        <ecNumber evidence="1">2.7.1.60</ecNumber>
    </recommendedName>
    <alternativeName>
        <fullName evidence="1">ManNAc kinase</fullName>
    </alternativeName>
    <alternativeName>
        <fullName evidence="1">N-acetyl-D-mannosamine kinase</fullName>
    </alternativeName>
</protein>
<dbReference type="EC" id="2.7.1.60" evidence="1"/>
<dbReference type="EMBL" id="CP000305">
    <property type="protein sequence ID" value="ABG17694.1"/>
    <property type="molecule type" value="Genomic_DNA"/>
</dbReference>
<dbReference type="EMBL" id="ACNQ01000008">
    <property type="protein sequence ID" value="EEO77816.1"/>
    <property type="molecule type" value="Genomic_DNA"/>
</dbReference>
<dbReference type="RefSeq" id="WP_002208516.1">
    <property type="nucleotide sequence ID" value="NZ_ACNQ01000008.1"/>
</dbReference>
<dbReference type="SMR" id="Q1CJY6"/>
<dbReference type="KEGG" id="ypn:YPN_1364"/>
<dbReference type="HOGENOM" id="CLU_036604_0_4_6"/>
<dbReference type="UniPathway" id="UPA00629">
    <property type="reaction ID" value="UER00681"/>
</dbReference>
<dbReference type="Proteomes" id="UP000008936">
    <property type="component" value="Chromosome"/>
</dbReference>
<dbReference type="GO" id="GO:0005524">
    <property type="term" value="F:ATP binding"/>
    <property type="evidence" value="ECO:0007669"/>
    <property type="project" value="UniProtKB-UniRule"/>
</dbReference>
<dbReference type="GO" id="GO:0009384">
    <property type="term" value="F:N-acylmannosamine kinase activity"/>
    <property type="evidence" value="ECO:0007669"/>
    <property type="project" value="UniProtKB-UniRule"/>
</dbReference>
<dbReference type="GO" id="GO:0008270">
    <property type="term" value="F:zinc ion binding"/>
    <property type="evidence" value="ECO:0007669"/>
    <property type="project" value="UniProtKB-UniRule"/>
</dbReference>
<dbReference type="GO" id="GO:0019262">
    <property type="term" value="P:N-acetylneuraminate catabolic process"/>
    <property type="evidence" value="ECO:0007669"/>
    <property type="project" value="UniProtKB-UniRule"/>
</dbReference>
<dbReference type="CDD" id="cd24069">
    <property type="entry name" value="ASKHA_NBD_ROK_EcNanK-like"/>
    <property type="match status" value="1"/>
</dbReference>
<dbReference type="FunFam" id="3.30.420.40:FF:000063">
    <property type="entry name" value="N-acetylmannosamine kinase"/>
    <property type="match status" value="1"/>
</dbReference>
<dbReference type="Gene3D" id="3.30.420.40">
    <property type="match status" value="2"/>
</dbReference>
<dbReference type="HAMAP" id="MF_01234">
    <property type="entry name" value="ManNAc_kinase"/>
    <property type="match status" value="1"/>
</dbReference>
<dbReference type="InterPro" id="IPR043129">
    <property type="entry name" value="ATPase_NBD"/>
</dbReference>
<dbReference type="InterPro" id="IPR023945">
    <property type="entry name" value="ManNAc_kinase_bac"/>
</dbReference>
<dbReference type="InterPro" id="IPR000600">
    <property type="entry name" value="ROK"/>
</dbReference>
<dbReference type="InterPro" id="IPR049874">
    <property type="entry name" value="ROK_cs"/>
</dbReference>
<dbReference type="NCBIfam" id="NF003461">
    <property type="entry name" value="PRK05082.1"/>
    <property type="match status" value="1"/>
</dbReference>
<dbReference type="PANTHER" id="PTHR18964:SF169">
    <property type="entry name" value="N-ACETYLMANNOSAMINE KINASE"/>
    <property type="match status" value="1"/>
</dbReference>
<dbReference type="PANTHER" id="PTHR18964">
    <property type="entry name" value="ROK (REPRESSOR, ORF, KINASE) FAMILY"/>
    <property type="match status" value="1"/>
</dbReference>
<dbReference type="Pfam" id="PF00480">
    <property type="entry name" value="ROK"/>
    <property type="match status" value="1"/>
</dbReference>
<dbReference type="SUPFAM" id="SSF53067">
    <property type="entry name" value="Actin-like ATPase domain"/>
    <property type="match status" value="1"/>
</dbReference>
<dbReference type="PROSITE" id="PS01125">
    <property type="entry name" value="ROK"/>
    <property type="match status" value="1"/>
</dbReference>
<proteinExistence type="inferred from homology"/>
<keyword id="KW-0067">ATP-binding</keyword>
<keyword id="KW-0119">Carbohydrate metabolism</keyword>
<keyword id="KW-0418">Kinase</keyword>
<keyword id="KW-0479">Metal-binding</keyword>
<keyword id="KW-0547">Nucleotide-binding</keyword>
<keyword id="KW-0808">Transferase</keyword>
<keyword id="KW-0862">Zinc</keyword>
<organism>
    <name type="scientific">Yersinia pestis bv. Antiqua (strain Nepal516)</name>
    <dbReference type="NCBI Taxonomy" id="377628"/>
    <lineage>
        <taxon>Bacteria</taxon>
        <taxon>Pseudomonadati</taxon>
        <taxon>Pseudomonadota</taxon>
        <taxon>Gammaproteobacteria</taxon>
        <taxon>Enterobacterales</taxon>
        <taxon>Yersiniaceae</taxon>
        <taxon>Yersinia</taxon>
    </lineage>
</organism>
<name>NANK_YERPN</name>
<sequence>MGKGLALDIGGTKIAAAVVTESGMLIGRQQIATPRGGAGQLAAALETLIAPYRHQVDFIAVASTGIISGGRLTALNPANLGGLADFPLYDCIRSISDLPCVLLNDGQAAAWAEYQALGDKNDNMMFVTVSTGVGGGIILNKKLLVGQRGLAGHIGHTLSDPHGVLCGCGRRGCVESVASGTAIGAETLGWKQPVSAATVFDMAQQGDAQAGKVINRSAAAIAQMLADMKMALDLEVVILGGSVGLAVGYLERVVAAQKTLPGIYRVPVQEAHHRQDSGLLGAALWARTSL</sequence>
<accession>Q1CJY6</accession>
<accession>C4GRX5</accession>
<reference key="1">
    <citation type="journal article" date="2006" name="J. Bacteriol.">
        <title>Complete genome sequence of Yersinia pestis strains Antiqua and Nepal516: evidence of gene reduction in an emerging pathogen.</title>
        <authorList>
            <person name="Chain P.S.G."/>
            <person name="Hu P."/>
            <person name="Malfatti S.A."/>
            <person name="Radnedge L."/>
            <person name="Larimer F."/>
            <person name="Vergez L.M."/>
            <person name="Worsham P."/>
            <person name="Chu M.C."/>
            <person name="Andersen G.L."/>
        </authorList>
    </citation>
    <scope>NUCLEOTIDE SEQUENCE [LARGE SCALE GENOMIC DNA]</scope>
    <source>
        <strain>Nepal516</strain>
    </source>
</reference>
<reference key="2">
    <citation type="submission" date="2009-04" db="EMBL/GenBank/DDBJ databases">
        <title>Yersinia pestis Nepal516A whole genome shotgun sequencing project.</title>
        <authorList>
            <person name="Plunkett G. III"/>
            <person name="Anderson B.D."/>
            <person name="Baumler D.J."/>
            <person name="Burland V."/>
            <person name="Cabot E.L."/>
            <person name="Glasner J.D."/>
            <person name="Mau B."/>
            <person name="Neeno-Eckwall E."/>
            <person name="Perna N.T."/>
            <person name="Munk A.C."/>
            <person name="Tapia R."/>
            <person name="Green L.D."/>
            <person name="Rogers Y.C."/>
            <person name="Detter J.C."/>
            <person name="Bruce D.C."/>
            <person name="Brettin T.S."/>
        </authorList>
    </citation>
    <scope>NUCLEOTIDE SEQUENCE [LARGE SCALE GENOMIC DNA]</scope>
    <source>
        <strain>Nepal516</strain>
    </source>
</reference>
<comment type="function">
    <text evidence="1">Catalyzes the phosphorylation of N-acetylmannosamine (ManNAc) to ManNAc-6-P.</text>
</comment>
<comment type="catalytic activity">
    <reaction evidence="1">
        <text>an N-acyl-D-mannosamine + ATP = an N-acyl-D-mannosamine 6-phosphate + ADP + H(+)</text>
        <dbReference type="Rhea" id="RHEA:23832"/>
        <dbReference type="ChEBI" id="CHEBI:15378"/>
        <dbReference type="ChEBI" id="CHEBI:16062"/>
        <dbReference type="ChEBI" id="CHEBI:30616"/>
        <dbReference type="ChEBI" id="CHEBI:57666"/>
        <dbReference type="ChEBI" id="CHEBI:456216"/>
        <dbReference type="EC" id="2.7.1.60"/>
    </reaction>
</comment>
<comment type="pathway">
    <text evidence="1">Amino-sugar metabolism; N-acetylneuraminate degradation; D-fructose 6-phosphate from N-acetylneuraminate: step 2/5.</text>
</comment>
<comment type="subunit">
    <text evidence="1">Homodimer.</text>
</comment>
<comment type="similarity">
    <text evidence="1">Belongs to the ROK (NagC/XylR) family. NanK subfamily.</text>
</comment>
<evidence type="ECO:0000255" key="1">
    <source>
        <dbReference type="HAMAP-Rule" id="MF_01234"/>
    </source>
</evidence>